<reference key="1">
    <citation type="journal article" date="2002" name="Nature">
        <title>Comparison of the genomes of two Xanthomonas pathogens with differing host specificities.</title>
        <authorList>
            <person name="da Silva A.C.R."/>
            <person name="Ferro J.A."/>
            <person name="Reinach F.C."/>
            <person name="Farah C.S."/>
            <person name="Furlan L.R."/>
            <person name="Quaggio R.B."/>
            <person name="Monteiro-Vitorello C.B."/>
            <person name="Van Sluys M.A."/>
            <person name="Almeida N.F. Jr."/>
            <person name="Alves L.M.C."/>
            <person name="do Amaral A.M."/>
            <person name="Bertolini M.C."/>
            <person name="Camargo L.E.A."/>
            <person name="Camarotte G."/>
            <person name="Cannavan F."/>
            <person name="Cardozo J."/>
            <person name="Chambergo F."/>
            <person name="Ciapina L.P."/>
            <person name="Cicarelli R.M.B."/>
            <person name="Coutinho L.L."/>
            <person name="Cursino-Santos J.R."/>
            <person name="El-Dorry H."/>
            <person name="Faria J.B."/>
            <person name="Ferreira A.J.S."/>
            <person name="Ferreira R.C.C."/>
            <person name="Ferro M.I.T."/>
            <person name="Formighieri E.F."/>
            <person name="Franco M.C."/>
            <person name="Greggio C.C."/>
            <person name="Gruber A."/>
            <person name="Katsuyama A.M."/>
            <person name="Kishi L.T."/>
            <person name="Leite R.P."/>
            <person name="Lemos E.G.M."/>
            <person name="Lemos M.V.F."/>
            <person name="Locali E.C."/>
            <person name="Machado M.A."/>
            <person name="Madeira A.M.B.N."/>
            <person name="Martinez-Rossi N.M."/>
            <person name="Martins E.C."/>
            <person name="Meidanis J."/>
            <person name="Menck C.F.M."/>
            <person name="Miyaki C.Y."/>
            <person name="Moon D.H."/>
            <person name="Moreira L.M."/>
            <person name="Novo M.T.M."/>
            <person name="Okura V.K."/>
            <person name="Oliveira M.C."/>
            <person name="Oliveira V.R."/>
            <person name="Pereira H.A."/>
            <person name="Rossi A."/>
            <person name="Sena J.A.D."/>
            <person name="Silva C."/>
            <person name="de Souza R.F."/>
            <person name="Spinola L.A.F."/>
            <person name="Takita M.A."/>
            <person name="Tamura R.E."/>
            <person name="Teixeira E.C."/>
            <person name="Tezza R.I.D."/>
            <person name="Trindade dos Santos M."/>
            <person name="Truffi D."/>
            <person name="Tsai S.M."/>
            <person name="White F.F."/>
            <person name="Setubal J.C."/>
            <person name="Kitajima J.P."/>
        </authorList>
    </citation>
    <scope>NUCLEOTIDE SEQUENCE [LARGE SCALE GENOMIC DNA]</scope>
    <source>
        <strain>306</strain>
    </source>
</reference>
<gene>
    <name evidence="1" type="primary">lysS</name>
    <name type="synonym">lysU</name>
    <name type="ordered locus">XAC1876</name>
</gene>
<protein>
    <recommendedName>
        <fullName evidence="1">Lysine--tRNA ligase</fullName>
        <ecNumber evidence="1">6.1.1.6</ecNumber>
    </recommendedName>
    <alternativeName>
        <fullName evidence="1">Lysyl-tRNA synthetase</fullName>
        <shortName evidence="1">LysRS</shortName>
    </alternativeName>
</protein>
<comment type="catalytic activity">
    <reaction evidence="1">
        <text>tRNA(Lys) + L-lysine + ATP = L-lysyl-tRNA(Lys) + AMP + diphosphate</text>
        <dbReference type="Rhea" id="RHEA:20792"/>
        <dbReference type="Rhea" id="RHEA-COMP:9696"/>
        <dbReference type="Rhea" id="RHEA-COMP:9697"/>
        <dbReference type="ChEBI" id="CHEBI:30616"/>
        <dbReference type="ChEBI" id="CHEBI:32551"/>
        <dbReference type="ChEBI" id="CHEBI:33019"/>
        <dbReference type="ChEBI" id="CHEBI:78442"/>
        <dbReference type="ChEBI" id="CHEBI:78529"/>
        <dbReference type="ChEBI" id="CHEBI:456215"/>
        <dbReference type="EC" id="6.1.1.6"/>
    </reaction>
</comment>
<comment type="cofactor">
    <cofactor evidence="1">
        <name>Mg(2+)</name>
        <dbReference type="ChEBI" id="CHEBI:18420"/>
    </cofactor>
    <text evidence="1">Binds 3 Mg(2+) ions per subunit.</text>
</comment>
<comment type="subunit">
    <text evidence="1">Homodimer.</text>
</comment>
<comment type="subcellular location">
    <subcellularLocation>
        <location evidence="1">Cytoplasm</location>
    </subcellularLocation>
</comment>
<comment type="similarity">
    <text evidence="1">Belongs to the class-II aminoacyl-tRNA synthetase family.</text>
</comment>
<evidence type="ECO:0000255" key="1">
    <source>
        <dbReference type="HAMAP-Rule" id="MF_00252"/>
    </source>
</evidence>
<keyword id="KW-0030">Aminoacyl-tRNA synthetase</keyword>
<keyword id="KW-0067">ATP-binding</keyword>
<keyword id="KW-0963">Cytoplasm</keyword>
<keyword id="KW-0436">Ligase</keyword>
<keyword id="KW-0460">Magnesium</keyword>
<keyword id="KW-0479">Metal-binding</keyword>
<keyword id="KW-0547">Nucleotide-binding</keyword>
<keyword id="KW-0648">Protein biosynthesis</keyword>
<accession>Q8PLC6</accession>
<name>SYK_XANAC</name>
<sequence>MTEQTPAPQPPADENSLIAERRAKLGALRGQGIAYPNDFVREHFAGDLQAEFADADTWTPEALEASGRTVRMAGRLMAKRVMGKASFAQIQDESGRVQLFLQGNVLGDAYTAFKGWDVGDIVAVEGGLTRTKTGELSVKASALRLLTKSLRPLPDKWHGLSDVEQRYRQRYVDLIVTPEAREVFIKRSKIIRAMRAWLDARRFLEVETPMMHYIPGGATAKPFTTHHNALDLDLYLRVAPELYLKRLVVGGLERVYEINRNFRNEGVSTRHNPEFTMLELYEAYATYHQIMDLTEQVIRDTAQSVLGTTQVSWDGADIDLAPAFRRWRMDEAVRHHNPEISAADCTDREALLRHCERLKIRVKPSYGWGKLLLEIFEATVEHTLVQPTFITDHPVEVSPLARSSDTEPGYTDRFELFINGKELANGFSELNDPEDQAARFQAQVQAKDGGDDEAMHFDADYIRALEYGMAPTGGLGIGIDRLVMLLTGSTSIRDVLLFPYMRPEA</sequence>
<feature type="chain" id="PRO_0000152706" description="Lysine--tRNA ligase">
    <location>
        <begin position="1"/>
        <end position="505"/>
    </location>
</feature>
<feature type="binding site" evidence="1">
    <location>
        <position position="415"/>
    </location>
    <ligand>
        <name>Mg(2+)</name>
        <dbReference type="ChEBI" id="CHEBI:18420"/>
        <label>1</label>
    </ligand>
</feature>
<feature type="binding site" evidence="1">
    <location>
        <position position="422"/>
    </location>
    <ligand>
        <name>Mg(2+)</name>
        <dbReference type="ChEBI" id="CHEBI:18420"/>
        <label>1</label>
    </ligand>
</feature>
<feature type="binding site" evidence="1">
    <location>
        <position position="422"/>
    </location>
    <ligand>
        <name>Mg(2+)</name>
        <dbReference type="ChEBI" id="CHEBI:18420"/>
        <label>2</label>
    </ligand>
</feature>
<dbReference type="EC" id="6.1.1.6" evidence="1"/>
<dbReference type="EMBL" id="AE008923">
    <property type="protein sequence ID" value="AAM36738.1"/>
    <property type="molecule type" value="Genomic_DNA"/>
</dbReference>
<dbReference type="RefSeq" id="WP_003486300.1">
    <property type="nucleotide sequence ID" value="NC_003919.1"/>
</dbReference>
<dbReference type="SMR" id="Q8PLC6"/>
<dbReference type="GeneID" id="66911021"/>
<dbReference type="KEGG" id="xac:XAC1876"/>
<dbReference type="eggNOG" id="COG1190">
    <property type="taxonomic scope" value="Bacteria"/>
</dbReference>
<dbReference type="HOGENOM" id="CLU_008255_6_0_6"/>
<dbReference type="Proteomes" id="UP000000576">
    <property type="component" value="Chromosome"/>
</dbReference>
<dbReference type="GO" id="GO:0005829">
    <property type="term" value="C:cytosol"/>
    <property type="evidence" value="ECO:0007669"/>
    <property type="project" value="TreeGrafter"/>
</dbReference>
<dbReference type="GO" id="GO:0005524">
    <property type="term" value="F:ATP binding"/>
    <property type="evidence" value="ECO:0007669"/>
    <property type="project" value="UniProtKB-UniRule"/>
</dbReference>
<dbReference type="GO" id="GO:0004824">
    <property type="term" value="F:lysine-tRNA ligase activity"/>
    <property type="evidence" value="ECO:0007669"/>
    <property type="project" value="UniProtKB-UniRule"/>
</dbReference>
<dbReference type="GO" id="GO:0000287">
    <property type="term" value="F:magnesium ion binding"/>
    <property type="evidence" value="ECO:0007669"/>
    <property type="project" value="UniProtKB-UniRule"/>
</dbReference>
<dbReference type="GO" id="GO:0000049">
    <property type="term" value="F:tRNA binding"/>
    <property type="evidence" value="ECO:0007669"/>
    <property type="project" value="TreeGrafter"/>
</dbReference>
<dbReference type="GO" id="GO:0006430">
    <property type="term" value="P:lysyl-tRNA aminoacylation"/>
    <property type="evidence" value="ECO:0007669"/>
    <property type="project" value="UniProtKB-UniRule"/>
</dbReference>
<dbReference type="CDD" id="cd00775">
    <property type="entry name" value="LysRS_core"/>
    <property type="match status" value="1"/>
</dbReference>
<dbReference type="CDD" id="cd04322">
    <property type="entry name" value="LysRS_N"/>
    <property type="match status" value="1"/>
</dbReference>
<dbReference type="FunFam" id="2.40.50.140:FF:000024">
    <property type="entry name" value="Lysine--tRNA ligase"/>
    <property type="match status" value="1"/>
</dbReference>
<dbReference type="FunFam" id="3.30.930.10:FF:000001">
    <property type="entry name" value="Lysine--tRNA ligase"/>
    <property type="match status" value="1"/>
</dbReference>
<dbReference type="Gene3D" id="3.30.930.10">
    <property type="entry name" value="Bira Bifunctional Protein, Domain 2"/>
    <property type="match status" value="1"/>
</dbReference>
<dbReference type="Gene3D" id="2.40.50.140">
    <property type="entry name" value="Nucleic acid-binding proteins"/>
    <property type="match status" value="1"/>
</dbReference>
<dbReference type="HAMAP" id="MF_00252">
    <property type="entry name" value="Lys_tRNA_synth_class2"/>
    <property type="match status" value="1"/>
</dbReference>
<dbReference type="InterPro" id="IPR004364">
    <property type="entry name" value="Aa-tRNA-synt_II"/>
</dbReference>
<dbReference type="InterPro" id="IPR006195">
    <property type="entry name" value="aa-tRNA-synth_II"/>
</dbReference>
<dbReference type="InterPro" id="IPR045864">
    <property type="entry name" value="aa-tRNA-synth_II/BPL/LPL"/>
</dbReference>
<dbReference type="InterPro" id="IPR002313">
    <property type="entry name" value="Lys-tRNA-ligase_II"/>
</dbReference>
<dbReference type="InterPro" id="IPR044136">
    <property type="entry name" value="Lys-tRNA-ligase_II_N"/>
</dbReference>
<dbReference type="InterPro" id="IPR018149">
    <property type="entry name" value="Lys-tRNA-synth_II_C"/>
</dbReference>
<dbReference type="InterPro" id="IPR012340">
    <property type="entry name" value="NA-bd_OB-fold"/>
</dbReference>
<dbReference type="InterPro" id="IPR004365">
    <property type="entry name" value="NA-bd_OB_tRNA"/>
</dbReference>
<dbReference type="NCBIfam" id="TIGR00499">
    <property type="entry name" value="lysS_bact"/>
    <property type="match status" value="1"/>
</dbReference>
<dbReference type="NCBIfam" id="NF001756">
    <property type="entry name" value="PRK00484.1"/>
    <property type="match status" value="1"/>
</dbReference>
<dbReference type="PANTHER" id="PTHR42918:SF15">
    <property type="entry name" value="LYSINE--TRNA LIGASE, CHLOROPLASTIC_MITOCHONDRIAL"/>
    <property type="match status" value="1"/>
</dbReference>
<dbReference type="PANTHER" id="PTHR42918">
    <property type="entry name" value="LYSYL-TRNA SYNTHETASE"/>
    <property type="match status" value="1"/>
</dbReference>
<dbReference type="Pfam" id="PF00152">
    <property type="entry name" value="tRNA-synt_2"/>
    <property type="match status" value="1"/>
</dbReference>
<dbReference type="Pfam" id="PF01336">
    <property type="entry name" value="tRNA_anti-codon"/>
    <property type="match status" value="1"/>
</dbReference>
<dbReference type="PRINTS" id="PR00982">
    <property type="entry name" value="TRNASYNTHLYS"/>
</dbReference>
<dbReference type="SUPFAM" id="SSF55681">
    <property type="entry name" value="Class II aaRS and biotin synthetases"/>
    <property type="match status" value="1"/>
</dbReference>
<dbReference type="SUPFAM" id="SSF50249">
    <property type="entry name" value="Nucleic acid-binding proteins"/>
    <property type="match status" value="1"/>
</dbReference>
<dbReference type="PROSITE" id="PS50862">
    <property type="entry name" value="AA_TRNA_LIGASE_II"/>
    <property type="match status" value="1"/>
</dbReference>
<proteinExistence type="inferred from homology"/>
<organism>
    <name type="scientific">Xanthomonas axonopodis pv. citri (strain 306)</name>
    <dbReference type="NCBI Taxonomy" id="190486"/>
    <lineage>
        <taxon>Bacteria</taxon>
        <taxon>Pseudomonadati</taxon>
        <taxon>Pseudomonadota</taxon>
        <taxon>Gammaproteobacteria</taxon>
        <taxon>Lysobacterales</taxon>
        <taxon>Lysobacteraceae</taxon>
        <taxon>Xanthomonas</taxon>
    </lineage>
</organism>